<evidence type="ECO:0000255" key="1">
    <source>
        <dbReference type="HAMAP-Rule" id="MF_01590"/>
    </source>
</evidence>
<protein>
    <recommendedName>
        <fullName evidence="1">tRNA U34 carboxymethyltransferase</fullName>
        <ecNumber evidence="1">2.5.1.-</ecNumber>
    </recommendedName>
</protein>
<accession>A9MUB3</accession>
<comment type="function">
    <text evidence="1">Catalyzes carboxymethyl transfer from carboxy-S-adenosyl-L-methionine (Cx-SAM) to 5-hydroxyuridine (ho5U) to form 5-carboxymethoxyuridine (cmo5U) at position 34 in tRNAs.</text>
</comment>
<comment type="catalytic activity">
    <reaction evidence="1">
        <text>carboxy-S-adenosyl-L-methionine + 5-hydroxyuridine(34) in tRNA = 5-carboxymethoxyuridine(34) in tRNA + S-adenosyl-L-homocysteine + H(+)</text>
        <dbReference type="Rhea" id="RHEA:52848"/>
        <dbReference type="Rhea" id="RHEA-COMP:13381"/>
        <dbReference type="Rhea" id="RHEA-COMP:13383"/>
        <dbReference type="ChEBI" id="CHEBI:15378"/>
        <dbReference type="ChEBI" id="CHEBI:57856"/>
        <dbReference type="ChEBI" id="CHEBI:134278"/>
        <dbReference type="ChEBI" id="CHEBI:136877"/>
        <dbReference type="ChEBI" id="CHEBI:136879"/>
    </reaction>
</comment>
<comment type="subunit">
    <text evidence="1">Homotetramer.</text>
</comment>
<comment type="similarity">
    <text evidence="1">Belongs to the class I-like SAM-binding methyltransferase superfamily. CmoB family.</text>
</comment>
<organism>
    <name type="scientific">Salmonella paratyphi B (strain ATCC BAA-1250 / SPB7)</name>
    <dbReference type="NCBI Taxonomy" id="1016998"/>
    <lineage>
        <taxon>Bacteria</taxon>
        <taxon>Pseudomonadati</taxon>
        <taxon>Pseudomonadota</taxon>
        <taxon>Gammaproteobacteria</taxon>
        <taxon>Enterobacterales</taxon>
        <taxon>Enterobacteriaceae</taxon>
        <taxon>Salmonella</taxon>
    </lineage>
</organism>
<sequence length="323" mass="37095">MIEFGNFYQLIAKNHLSHWLETLPAQIAAWQREQQHGLFKQWSNAVEFLPEMTPWRLDLLHSVTAESETPLSEGQLKRIDTLLRNLMPWRKGPFSLYGVDIDTEWRSDWKWDRVLPHLSDLTGRTILDVGCGSGYHLWRMIGAGAHLAVGIDPTQLFLCQFEAVRKLLGNDQRAHLLPLGIEQLPALKAFDTVFSMGVLYHRRSPLEHLWQLKDQLVNEGELVLETLVIDGDENTVLVPGDRYAQMRNVYFIPSAPALKKWLEKCGFIDVRIADVCVTTTEEQRRTEWMVTESLADFLDPNDRSKTVEGYPAPQRAVLIARKP</sequence>
<reference key="1">
    <citation type="submission" date="2007-11" db="EMBL/GenBank/DDBJ databases">
        <authorList>
            <consortium name="The Salmonella enterica serovar Paratyphi B Genome Sequencing Project"/>
            <person name="McClelland M."/>
            <person name="Sanderson E.K."/>
            <person name="Porwollik S."/>
            <person name="Spieth J."/>
            <person name="Clifton W.S."/>
            <person name="Fulton R."/>
            <person name="Cordes M."/>
            <person name="Wollam A."/>
            <person name="Shah N."/>
            <person name="Pepin K."/>
            <person name="Bhonagiri V."/>
            <person name="Nash W."/>
            <person name="Johnson M."/>
            <person name="Thiruvilangam P."/>
            <person name="Wilson R."/>
        </authorList>
    </citation>
    <scope>NUCLEOTIDE SEQUENCE [LARGE SCALE GENOMIC DNA]</scope>
    <source>
        <strain>ATCC BAA-1250 / SPB7</strain>
    </source>
</reference>
<proteinExistence type="inferred from homology"/>
<keyword id="KW-0808">Transferase</keyword>
<keyword id="KW-0819">tRNA processing</keyword>
<gene>
    <name evidence="1" type="primary">cmoB</name>
    <name type="ordered locus">SPAB_01257</name>
</gene>
<name>CMOB_SALPB</name>
<dbReference type="EC" id="2.5.1.-" evidence="1"/>
<dbReference type="EMBL" id="CP000886">
    <property type="protein sequence ID" value="ABX66669.1"/>
    <property type="molecule type" value="Genomic_DNA"/>
</dbReference>
<dbReference type="RefSeq" id="WP_000569034.1">
    <property type="nucleotide sequence ID" value="NC_010102.1"/>
</dbReference>
<dbReference type="SMR" id="A9MUB3"/>
<dbReference type="KEGG" id="spq:SPAB_01257"/>
<dbReference type="PATRIC" id="fig|1016998.12.peg.1184"/>
<dbReference type="HOGENOM" id="CLU_052665_0_0_6"/>
<dbReference type="BioCyc" id="SENT1016998:SPAB_RS05215-MONOMER"/>
<dbReference type="Proteomes" id="UP000008556">
    <property type="component" value="Chromosome"/>
</dbReference>
<dbReference type="GO" id="GO:0008168">
    <property type="term" value="F:methyltransferase activity"/>
    <property type="evidence" value="ECO:0007669"/>
    <property type="project" value="TreeGrafter"/>
</dbReference>
<dbReference type="GO" id="GO:0016765">
    <property type="term" value="F:transferase activity, transferring alkyl or aryl (other than methyl) groups"/>
    <property type="evidence" value="ECO:0007669"/>
    <property type="project" value="UniProtKB-UniRule"/>
</dbReference>
<dbReference type="GO" id="GO:0002098">
    <property type="term" value="P:tRNA wobble uridine modification"/>
    <property type="evidence" value="ECO:0007669"/>
    <property type="project" value="InterPro"/>
</dbReference>
<dbReference type="CDD" id="cd02440">
    <property type="entry name" value="AdoMet_MTases"/>
    <property type="match status" value="1"/>
</dbReference>
<dbReference type="FunFam" id="3.40.50.150:FF:000080">
    <property type="entry name" value="tRNA U34 carboxymethyltransferase"/>
    <property type="match status" value="1"/>
</dbReference>
<dbReference type="Gene3D" id="3.40.50.150">
    <property type="entry name" value="Vaccinia Virus protein VP39"/>
    <property type="match status" value="1"/>
</dbReference>
<dbReference type="HAMAP" id="MF_01590">
    <property type="entry name" value="tRNA_carboxymethyltr_CmoB"/>
    <property type="match status" value="1"/>
</dbReference>
<dbReference type="InterPro" id="IPR010017">
    <property type="entry name" value="CmoB"/>
</dbReference>
<dbReference type="InterPro" id="IPR027555">
    <property type="entry name" value="Mo5U34_MeTrfas-like"/>
</dbReference>
<dbReference type="InterPro" id="IPR029063">
    <property type="entry name" value="SAM-dependent_MTases_sf"/>
</dbReference>
<dbReference type="NCBIfam" id="NF011650">
    <property type="entry name" value="PRK15068.1"/>
    <property type="match status" value="1"/>
</dbReference>
<dbReference type="NCBIfam" id="TIGR00452">
    <property type="entry name" value="tRNA 5-methoxyuridine(34)/uridine 5-oxyacetic acid(34) synthase CmoB"/>
    <property type="match status" value="1"/>
</dbReference>
<dbReference type="PANTHER" id="PTHR43464">
    <property type="entry name" value="METHYLTRANSFERASE"/>
    <property type="match status" value="1"/>
</dbReference>
<dbReference type="PANTHER" id="PTHR43464:SF95">
    <property type="entry name" value="TRNA U34 CARBOXYMETHYLTRANSFERASE"/>
    <property type="match status" value="1"/>
</dbReference>
<dbReference type="Pfam" id="PF08003">
    <property type="entry name" value="Methyltransf_9"/>
    <property type="match status" value="1"/>
</dbReference>
<dbReference type="SUPFAM" id="SSF53335">
    <property type="entry name" value="S-adenosyl-L-methionine-dependent methyltransferases"/>
    <property type="match status" value="1"/>
</dbReference>
<feature type="chain" id="PRO_1000087971" description="tRNA U34 carboxymethyltransferase">
    <location>
        <begin position="1"/>
        <end position="323"/>
    </location>
</feature>
<feature type="binding site" evidence="1">
    <location>
        <position position="91"/>
    </location>
    <ligand>
        <name>carboxy-S-adenosyl-L-methionine</name>
        <dbReference type="ChEBI" id="CHEBI:134278"/>
    </ligand>
</feature>
<feature type="binding site" evidence="1">
    <location>
        <position position="105"/>
    </location>
    <ligand>
        <name>carboxy-S-adenosyl-L-methionine</name>
        <dbReference type="ChEBI" id="CHEBI:134278"/>
    </ligand>
</feature>
<feature type="binding site" evidence="1">
    <location>
        <position position="110"/>
    </location>
    <ligand>
        <name>carboxy-S-adenosyl-L-methionine</name>
        <dbReference type="ChEBI" id="CHEBI:134278"/>
    </ligand>
</feature>
<feature type="binding site" evidence="1">
    <location>
        <position position="130"/>
    </location>
    <ligand>
        <name>carboxy-S-adenosyl-L-methionine</name>
        <dbReference type="ChEBI" id="CHEBI:134278"/>
    </ligand>
</feature>
<feature type="binding site" evidence="1">
    <location>
        <begin position="152"/>
        <end position="154"/>
    </location>
    <ligand>
        <name>carboxy-S-adenosyl-L-methionine</name>
        <dbReference type="ChEBI" id="CHEBI:134278"/>
    </ligand>
</feature>
<feature type="binding site" evidence="1">
    <location>
        <begin position="181"/>
        <end position="182"/>
    </location>
    <ligand>
        <name>carboxy-S-adenosyl-L-methionine</name>
        <dbReference type="ChEBI" id="CHEBI:134278"/>
    </ligand>
</feature>
<feature type="binding site" evidence="1">
    <location>
        <position position="196"/>
    </location>
    <ligand>
        <name>carboxy-S-adenosyl-L-methionine</name>
        <dbReference type="ChEBI" id="CHEBI:134278"/>
    </ligand>
</feature>
<feature type="binding site" evidence="1">
    <location>
        <position position="200"/>
    </location>
    <ligand>
        <name>carboxy-S-adenosyl-L-methionine</name>
        <dbReference type="ChEBI" id="CHEBI:134278"/>
    </ligand>
</feature>
<feature type="binding site" evidence="1">
    <location>
        <position position="315"/>
    </location>
    <ligand>
        <name>carboxy-S-adenosyl-L-methionine</name>
        <dbReference type="ChEBI" id="CHEBI:134278"/>
    </ligand>
</feature>